<reference key="1">
    <citation type="journal article" date="2011" name="J. Bacteriol.">
        <title>Comparative genomics of 28 Salmonella enterica isolates: evidence for CRISPR-mediated adaptive sublineage evolution.</title>
        <authorList>
            <person name="Fricke W.F."/>
            <person name="Mammel M.K."/>
            <person name="McDermott P.F."/>
            <person name="Tartera C."/>
            <person name="White D.G."/>
            <person name="Leclerc J.E."/>
            <person name="Ravel J."/>
            <person name="Cebula T.A."/>
        </authorList>
    </citation>
    <scope>NUCLEOTIDE SEQUENCE [LARGE SCALE GENOMIC DNA]</scope>
    <source>
        <strain>CT_02021853</strain>
    </source>
</reference>
<feature type="chain" id="PRO_1000140605" description="Small ribosomal subunit protein uS8">
    <location>
        <begin position="1"/>
        <end position="130"/>
    </location>
</feature>
<comment type="function">
    <text evidence="1">One of the primary rRNA binding proteins, it binds directly to 16S rRNA central domain where it helps coordinate assembly of the platform of the 30S subunit.</text>
</comment>
<comment type="subunit">
    <text evidence="1">Part of the 30S ribosomal subunit. Contacts proteins S5 and S12.</text>
</comment>
<comment type="similarity">
    <text evidence="1">Belongs to the universal ribosomal protein uS8 family.</text>
</comment>
<organism>
    <name type="scientific">Salmonella dublin (strain CT_02021853)</name>
    <dbReference type="NCBI Taxonomy" id="439851"/>
    <lineage>
        <taxon>Bacteria</taxon>
        <taxon>Pseudomonadati</taxon>
        <taxon>Pseudomonadota</taxon>
        <taxon>Gammaproteobacteria</taxon>
        <taxon>Enterobacterales</taxon>
        <taxon>Enterobacteriaceae</taxon>
        <taxon>Salmonella</taxon>
    </lineage>
</organism>
<name>RS8_SALDC</name>
<evidence type="ECO:0000255" key="1">
    <source>
        <dbReference type="HAMAP-Rule" id="MF_01302"/>
    </source>
</evidence>
<evidence type="ECO:0000305" key="2"/>
<gene>
    <name evidence="1" type="primary">rpsH</name>
    <name type="ordered locus">SeD_A3793</name>
</gene>
<sequence length="130" mass="14127">MSMQDPIADMLTRIRNGQAANKAAVTMPSSKLKVAIANVLKEEGFIEDFKVEGDTKPELELTLKYFQGKAVVESIQRVSRPGLRIYKRKDELPKVMAGLGIAVVSTSKGVMTDRAARQAGLGGEIICYVA</sequence>
<dbReference type="EMBL" id="CP001144">
    <property type="protein sequence ID" value="ACH74976.1"/>
    <property type="molecule type" value="Genomic_DNA"/>
</dbReference>
<dbReference type="RefSeq" id="WP_000062611.1">
    <property type="nucleotide sequence ID" value="NC_011205.1"/>
</dbReference>
<dbReference type="SMR" id="B5FJK0"/>
<dbReference type="GeneID" id="93778681"/>
<dbReference type="KEGG" id="sed:SeD_A3793"/>
<dbReference type="HOGENOM" id="CLU_098428_0_0_6"/>
<dbReference type="Proteomes" id="UP000008322">
    <property type="component" value="Chromosome"/>
</dbReference>
<dbReference type="GO" id="GO:1990904">
    <property type="term" value="C:ribonucleoprotein complex"/>
    <property type="evidence" value="ECO:0007669"/>
    <property type="project" value="UniProtKB-KW"/>
</dbReference>
<dbReference type="GO" id="GO:0005840">
    <property type="term" value="C:ribosome"/>
    <property type="evidence" value="ECO:0007669"/>
    <property type="project" value="UniProtKB-KW"/>
</dbReference>
<dbReference type="GO" id="GO:0019843">
    <property type="term" value="F:rRNA binding"/>
    <property type="evidence" value="ECO:0007669"/>
    <property type="project" value="UniProtKB-UniRule"/>
</dbReference>
<dbReference type="GO" id="GO:0003735">
    <property type="term" value="F:structural constituent of ribosome"/>
    <property type="evidence" value="ECO:0007669"/>
    <property type="project" value="InterPro"/>
</dbReference>
<dbReference type="GO" id="GO:0006412">
    <property type="term" value="P:translation"/>
    <property type="evidence" value="ECO:0007669"/>
    <property type="project" value="UniProtKB-UniRule"/>
</dbReference>
<dbReference type="FunFam" id="3.30.1370.30:FF:000003">
    <property type="entry name" value="30S ribosomal protein S8"/>
    <property type="match status" value="1"/>
</dbReference>
<dbReference type="FunFam" id="3.30.1490.10:FF:000001">
    <property type="entry name" value="30S ribosomal protein S8"/>
    <property type="match status" value="1"/>
</dbReference>
<dbReference type="Gene3D" id="3.30.1370.30">
    <property type="match status" value="1"/>
</dbReference>
<dbReference type="Gene3D" id="3.30.1490.10">
    <property type="match status" value="1"/>
</dbReference>
<dbReference type="HAMAP" id="MF_01302_B">
    <property type="entry name" value="Ribosomal_uS8_B"/>
    <property type="match status" value="1"/>
</dbReference>
<dbReference type="InterPro" id="IPR000630">
    <property type="entry name" value="Ribosomal_uS8"/>
</dbReference>
<dbReference type="InterPro" id="IPR047863">
    <property type="entry name" value="Ribosomal_uS8_CS"/>
</dbReference>
<dbReference type="InterPro" id="IPR035987">
    <property type="entry name" value="Ribosomal_uS8_sf"/>
</dbReference>
<dbReference type="NCBIfam" id="NF001109">
    <property type="entry name" value="PRK00136.1"/>
    <property type="match status" value="1"/>
</dbReference>
<dbReference type="PANTHER" id="PTHR11758">
    <property type="entry name" value="40S RIBOSOMAL PROTEIN S15A"/>
    <property type="match status" value="1"/>
</dbReference>
<dbReference type="Pfam" id="PF00410">
    <property type="entry name" value="Ribosomal_S8"/>
    <property type="match status" value="1"/>
</dbReference>
<dbReference type="SUPFAM" id="SSF56047">
    <property type="entry name" value="Ribosomal protein S8"/>
    <property type="match status" value="1"/>
</dbReference>
<dbReference type="PROSITE" id="PS00053">
    <property type="entry name" value="RIBOSOMAL_S8"/>
    <property type="match status" value="1"/>
</dbReference>
<accession>B5FJK0</accession>
<protein>
    <recommendedName>
        <fullName evidence="1">Small ribosomal subunit protein uS8</fullName>
    </recommendedName>
    <alternativeName>
        <fullName evidence="2">30S ribosomal protein S8</fullName>
    </alternativeName>
</protein>
<keyword id="KW-0687">Ribonucleoprotein</keyword>
<keyword id="KW-0689">Ribosomal protein</keyword>
<keyword id="KW-0694">RNA-binding</keyword>
<keyword id="KW-0699">rRNA-binding</keyword>
<proteinExistence type="inferred from homology"/>